<name>RS21_XYLFM</name>
<feature type="chain" id="PRO_1000120681" description="Small ribosomal subunit protein bS21">
    <location>
        <begin position="1"/>
        <end position="71"/>
    </location>
</feature>
<feature type="region of interest" description="Disordered" evidence="2">
    <location>
        <begin position="39"/>
        <end position="71"/>
    </location>
</feature>
<feature type="compositionally biased region" description="Basic residues" evidence="2">
    <location>
        <begin position="45"/>
        <end position="71"/>
    </location>
</feature>
<dbReference type="EMBL" id="CP000941">
    <property type="protein sequence ID" value="ACA12695.1"/>
    <property type="molecule type" value="Genomic_DNA"/>
</dbReference>
<dbReference type="RefSeq" id="WP_004083596.1">
    <property type="nucleotide sequence ID" value="NC_010513.1"/>
</dbReference>
<dbReference type="SMR" id="B0U4B6"/>
<dbReference type="KEGG" id="xfm:Xfasm12_1804"/>
<dbReference type="HOGENOM" id="CLU_159258_1_0_6"/>
<dbReference type="GO" id="GO:1990904">
    <property type="term" value="C:ribonucleoprotein complex"/>
    <property type="evidence" value="ECO:0007669"/>
    <property type="project" value="UniProtKB-KW"/>
</dbReference>
<dbReference type="GO" id="GO:0005840">
    <property type="term" value="C:ribosome"/>
    <property type="evidence" value="ECO:0007669"/>
    <property type="project" value="UniProtKB-KW"/>
</dbReference>
<dbReference type="GO" id="GO:0003735">
    <property type="term" value="F:structural constituent of ribosome"/>
    <property type="evidence" value="ECO:0007669"/>
    <property type="project" value="InterPro"/>
</dbReference>
<dbReference type="GO" id="GO:0006412">
    <property type="term" value="P:translation"/>
    <property type="evidence" value="ECO:0007669"/>
    <property type="project" value="UniProtKB-UniRule"/>
</dbReference>
<dbReference type="Gene3D" id="1.20.5.1150">
    <property type="entry name" value="Ribosomal protein S8"/>
    <property type="match status" value="1"/>
</dbReference>
<dbReference type="HAMAP" id="MF_00358">
    <property type="entry name" value="Ribosomal_bS21"/>
    <property type="match status" value="1"/>
</dbReference>
<dbReference type="InterPro" id="IPR001911">
    <property type="entry name" value="Ribosomal_bS21"/>
</dbReference>
<dbReference type="InterPro" id="IPR018278">
    <property type="entry name" value="Ribosomal_bS21_CS"/>
</dbReference>
<dbReference type="InterPro" id="IPR038380">
    <property type="entry name" value="Ribosomal_bS21_sf"/>
</dbReference>
<dbReference type="NCBIfam" id="TIGR00030">
    <property type="entry name" value="S21p"/>
    <property type="match status" value="1"/>
</dbReference>
<dbReference type="PANTHER" id="PTHR21109">
    <property type="entry name" value="MITOCHONDRIAL 28S RIBOSOMAL PROTEIN S21"/>
    <property type="match status" value="1"/>
</dbReference>
<dbReference type="PANTHER" id="PTHR21109:SF22">
    <property type="entry name" value="SMALL RIBOSOMAL SUBUNIT PROTEIN BS21"/>
    <property type="match status" value="1"/>
</dbReference>
<dbReference type="Pfam" id="PF01165">
    <property type="entry name" value="Ribosomal_S21"/>
    <property type="match status" value="1"/>
</dbReference>
<dbReference type="PRINTS" id="PR00976">
    <property type="entry name" value="RIBOSOMALS21"/>
</dbReference>
<dbReference type="PROSITE" id="PS01181">
    <property type="entry name" value="RIBOSOMAL_S21"/>
    <property type="match status" value="1"/>
</dbReference>
<sequence length="71" mass="8672">MPSVKVRENEPFEFALRRFKRICEKAGILAETRKREFYEKPTQERKRKAAAAVKRQMRRTSRDVTKRKRLY</sequence>
<protein>
    <recommendedName>
        <fullName evidence="1">Small ribosomal subunit protein bS21</fullName>
    </recommendedName>
    <alternativeName>
        <fullName evidence="3">30S ribosomal protein S21</fullName>
    </alternativeName>
</protein>
<organism>
    <name type="scientific">Xylella fastidiosa (strain M12)</name>
    <dbReference type="NCBI Taxonomy" id="405440"/>
    <lineage>
        <taxon>Bacteria</taxon>
        <taxon>Pseudomonadati</taxon>
        <taxon>Pseudomonadota</taxon>
        <taxon>Gammaproteobacteria</taxon>
        <taxon>Lysobacterales</taxon>
        <taxon>Lysobacteraceae</taxon>
        <taxon>Xylella</taxon>
    </lineage>
</organism>
<evidence type="ECO:0000255" key="1">
    <source>
        <dbReference type="HAMAP-Rule" id="MF_00358"/>
    </source>
</evidence>
<evidence type="ECO:0000256" key="2">
    <source>
        <dbReference type="SAM" id="MobiDB-lite"/>
    </source>
</evidence>
<evidence type="ECO:0000305" key="3"/>
<reference key="1">
    <citation type="journal article" date="2010" name="J. Bacteriol.">
        <title>Whole genome sequences of two Xylella fastidiosa strains (M12 and M23) causing almond leaf scorch disease in California.</title>
        <authorList>
            <person name="Chen J."/>
            <person name="Xie G."/>
            <person name="Han S."/>
            <person name="Chertkov O."/>
            <person name="Sims D."/>
            <person name="Civerolo E.L."/>
        </authorList>
    </citation>
    <scope>NUCLEOTIDE SEQUENCE [LARGE SCALE GENOMIC DNA]</scope>
    <source>
        <strain>M12</strain>
    </source>
</reference>
<comment type="similarity">
    <text evidence="1">Belongs to the bacterial ribosomal protein bS21 family.</text>
</comment>
<gene>
    <name evidence="1" type="primary">rpsU</name>
    <name type="ordered locus">Xfasm12_1804</name>
</gene>
<proteinExistence type="inferred from homology"/>
<keyword id="KW-0687">Ribonucleoprotein</keyword>
<keyword id="KW-0689">Ribosomal protein</keyword>
<accession>B0U4B6</accession>